<dbReference type="EMBL" id="AF333323">
    <property type="protein sequence ID" value="AAK19552.1"/>
    <property type="molecule type" value="Genomic_DNA"/>
</dbReference>
<dbReference type="EMBL" id="AE015924">
    <property type="protein sequence ID" value="AAQ65429.1"/>
    <property type="status" value="ALT_INIT"/>
    <property type="molecule type" value="Genomic_DNA"/>
</dbReference>
<dbReference type="RefSeq" id="WP_010955948.1">
    <property type="nucleotide sequence ID" value="NC_002950.2"/>
</dbReference>
<dbReference type="SMR" id="Q9AGG3"/>
<dbReference type="STRING" id="242619.PG_0195"/>
<dbReference type="EnsemblBacteria" id="AAQ65429">
    <property type="protein sequence ID" value="AAQ65429"/>
    <property type="gene ID" value="PG_0195"/>
</dbReference>
<dbReference type="KEGG" id="pgi:PG_0195"/>
<dbReference type="eggNOG" id="COG1592">
    <property type="taxonomic scope" value="Bacteria"/>
</dbReference>
<dbReference type="HOGENOM" id="CLU_095256_0_1_10"/>
<dbReference type="Proteomes" id="UP000000588">
    <property type="component" value="Chromosome"/>
</dbReference>
<dbReference type="GO" id="GO:0005737">
    <property type="term" value="C:cytoplasm"/>
    <property type="evidence" value="ECO:0007669"/>
    <property type="project" value="UniProtKB-SubCell"/>
</dbReference>
<dbReference type="GO" id="GO:0005506">
    <property type="term" value="F:iron ion binding"/>
    <property type="evidence" value="ECO:0000250"/>
    <property type="project" value="UniProtKB"/>
</dbReference>
<dbReference type="GO" id="GO:0016491">
    <property type="term" value="F:oxidoreductase activity"/>
    <property type="evidence" value="ECO:0007669"/>
    <property type="project" value="InterPro"/>
</dbReference>
<dbReference type="GO" id="GO:0006979">
    <property type="term" value="P:response to oxidative stress"/>
    <property type="evidence" value="ECO:0000303"/>
    <property type="project" value="UniProtKB"/>
</dbReference>
<dbReference type="CDD" id="cd00729">
    <property type="entry name" value="rubredoxin_SM"/>
    <property type="match status" value="1"/>
</dbReference>
<dbReference type="CDD" id="cd01041">
    <property type="entry name" value="Rubrerythrin"/>
    <property type="match status" value="1"/>
</dbReference>
<dbReference type="FunFam" id="2.20.28.10:FF:000018">
    <property type="entry name" value="Rubrerythrin"/>
    <property type="match status" value="1"/>
</dbReference>
<dbReference type="Gene3D" id="1.20.1260.10">
    <property type="match status" value="1"/>
</dbReference>
<dbReference type="Gene3D" id="2.20.28.10">
    <property type="match status" value="1"/>
</dbReference>
<dbReference type="InterPro" id="IPR012347">
    <property type="entry name" value="Ferritin-like"/>
</dbReference>
<dbReference type="InterPro" id="IPR009040">
    <property type="entry name" value="Ferritin-like_diiron"/>
</dbReference>
<dbReference type="InterPro" id="IPR009078">
    <property type="entry name" value="Ferritin-like_SF"/>
</dbReference>
<dbReference type="InterPro" id="IPR003251">
    <property type="entry name" value="Rr_diiron-bd_dom"/>
</dbReference>
<dbReference type="InterPro" id="IPR024934">
    <property type="entry name" value="Rubredoxin-like_dom"/>
</dbReference>
<dbReference type="InterPro" id="IPR052364">
    <property type="entry name" value="Rubrerythrin"/>
</dbReference>
<dbReference type="InterPro" id="IPR048574">
    <property type="entry name" value="RUBY_RBDX"/>
</dbReference>
<dbReference type="NCBIfam" id="NF045767">
    <property type="entry name" value="RuberyRbr"/>
    <property type="match status" value="1"/>
</dbReference>
<dbReference type="PANTHER" id="PTHR43865">
    <property type="entry name" value="RUBRERYTHRIN-RELATED"/>
    <property type="match status" value="1"/>
</dbReference>
<dbReference type="PANTHER" id="PTHR43865:SF1">
    <property type="entry name" value="RUBRERYTHRIN-RELATED"/>
    <property type="match status" value="1"/>
</dbReference>
<dbReference type="Pfam" id="PF02915">
    <property type="entry name" value="Rubrerythrin"/>
    <property type="match status" value="1"/>
</dbReference>
<dbReference type="Pfam" id="PF21349">
    <property type="entry name" value="RUBY_RBDX"/>
    <property type="match status" value="1"/>
</dbReference>
<dbReference type="SUPFAM" id="SSF47240">
    <property type="entry name" value="Ferritin-like"/>
    <property type="match status" value="1"/>
</dbReference>
<dbReference type="SUPFAM" id="SSF57802">
    <property type="entry name" value="Rubredoxin-like"/>
    <property type="match status" value="1"/>
</dbReference>
<dbReference type="PROSITE" id="PS50905">
    <property type="entry name" value="FERRITIN_LIKE"/>
    <property type="match status" value="1"/>
</dbReference>
<dbReference type="PROSITE" id="PS50903">
    <property type="entry name" value="RUBREDOXIN_LIKE"/>
    <property type="match status" value="1"/>
</dbReference>
<feature type="chain" id="PRO_0000135066" description="Rubrerythrin">
    <location>
        <begin position="1"/>
        <end position="200"/>
    </location>
</feature>
<feature type="domain" description="Ferritin-like diiron" evidence="3">
    <location>
        <begin position="12"/>
        <end position="155"/>
    </location>
</feature>
<feature type="domain" description="Rubredoxin-like" evidence="4">
    <location>
        <begin position="162"/>
        <end position="200"/>
    </location>
</feature>
<feature type="binding site" evidence="2">
    <location>
        <position position="29"/>
    </location>
    <ligand>
        <name>Fe(3+)</name>
        <dbReference type="ChEBI" id="CHEBI:29034"/>
        <label>1</label>
    </ligand>
</feature>
<feature type="binding site" evidence="2">
    <location>
        <position position="62"/>
    </location>
    <ligand>
        <name>Fe(3+)</name>
        <dbReference type="ChEBI" id="CHEBI:29034"/>
        <label>1</label>
    </ligand>
</feature>
<feature type="binding site" evidence="2">
    <location>
        <position position="62"/>
    </location>
    <ligand>
        <name>Fe(3+)</name>
        <dbReference type="ChEBI" id="CHEBI:29034"/>
        <label>2</label>
    </ligand>
</feature>
<feature type="binding site" evidence="2">
    <location>
        <position position="103"/>
    </location>
    <ligand>
        <name>Fe(3+)</name>
        <dbReference type="ChEBI" id="CHEBI:29034"/>
        <label>2</label>
    </ligand>
</feature>
<feature type="binding site" evidence="2">
    <location>
        <position position="106"/>
    </location>
    <ligand>
        <name>Fe(3+)</name>
        <dbReference type="ChEBI" id="CHEBI:29034"/>
        <label>1</label>
    </ligand>
</feature>
<feature type="binding site" evidence="2">
    <location>
        <position position="137"/>
    </location>
    <ligand>
        <name>Fe(3+)</name>
        <dbReference type="ChEBI" id="CHEBI:29034"/>
        <label>1</label>
    </ligand>
</feature>
<feature type="binding site" evidence="2">
    <location>
        <position position="137"/>
    </location>
    <ligand>
        <name>Fe(3+)</name>
        <dbReference type="ChEBI" id="CHEBI:29034"/>
        <label>2</label>
    </ligand>
</feature>
<feature type="binding site" evidence="2">
    <location>
        <position position="140"/>
    </location>
    <ligand>
        <name>Fe(3+)</name>
        <dbReference type="ChEBI" id="CHEBI:29034"/>
        <label>2</label>
    </ligand>
</feature>
<feature type="binding site" evidence="2">
    <location>
        <position position="167"/>
    </location>
    <ligand>
        <name>Fe(3+)</name>
        <dbReference type="ChEBI" id="CHEBI:29034"/>
        <label>3</label>
    </ligand>
</feature>
<feature type="binding site" evidence="2">
    <location>
        <position position="170"/>
    </location>
    <ligand>
        <name>Fe(3+)</name>
        <dbReference type="ChEBI" id="CHEBI:29034"/>
        <label>3</label>
    </ligand>
</feature>
<feature type="binding site" evidence="2">
    <location>
        <position position="183"/>
    </location>
    <ligand>
        <name>Fe(3+)</name>
        <dbReference type="ChEBI" id="CHEBI:29034"/>
        <label>3</label>
    </ligand>
</feature>
<feature type="binding site" evidence="2">
    <location>
        <position position="186"/>
    </location>
    <ligand>
        <name>Fe(3+)</name>
        <dbReference type="ChEBI" id="CHEBI:29034"/>
        <label>3</label>
    </ligand>
</feature>
<name>RUBY_PORGI</name>
<protein>
    <recommendedName>
        <fullName>Rubrerythrin</fullName>
        <shortName>Rr</shortName>
    </recommendedName>
</protein>
<comment type="function">
    <text evidence="6">May provide oxidative stress protection via catalytic reduction of intracellular hydrogen peroxide.</text>
</comment>
<comment type="cofactor">
    <cofactor evidence="1">
        <name>Fe(3+)</name>
        <dbReference type="ChEBI" id="CHEBI:29034"/>
    </cofactor>
    <text evidence="1">Binds 3 Fe(3+) ions per subunit.</text>
</comment>
<comment type="subunit">
    <text evidence="2">Homodimer. Possesses two rubredoxin-like centers and two non-sulfur oxo-bridged di-iron centers per dimer (By similarity).</text>
</comment>
<comment type="subcellular location">
    <subcellularLocation>
        <location evidence="7">Cytoplasm</location>
    </subcellularLocation>
</comment>
<comment type="induction">
    <text evidence="5">By exposure to dioxygen and hydrogen peroxide.</text>
</comment>
<comment type="sequence caution" evidence="7">
    <conflict type="erroneous initiation">
        <sequence resource="EMBL-CDS" id="AAQ65429"/>
    </conflict>
</comment>
<sequence>MSIKKKTEMNKSIKGSKTEKHLLMAFAGESQARSRYTFFASVAKKEGYEQIAGVFMETAEQEKEHAKRFFSFLEGGMLEITASFPAGIIGSTAENLRAAAAGENEEWTDLYPAFAETAEEEGFKEIAAVFRQIAKVEAEHERRYLALLAHVEDGSVFERTEEIAWQCRNCGYVITSKKAPKLCPACAHPQAYFEPMKTNY</sequence>
<keyword id="KW-0963">Cytoplasm</keyword>
<keyword id="KW-0249">Electron transport</keyword>
<keyword id="KW-0408">Iron</keyword>
<keyword id="KW-0479">Metal-binding</keyword>
<keyword id="KW-1185">Reference proteome</keyword>
<keyword id="KW-0813">Transport</keyword>
<reference evidence="7" key="1">
    <citation type="journal article" date="2002" name="Mol. Microbiol.">
        <title>Role of rubrerythrin in the oxidative stress response of Porphyromonas gingivalis.</title>
        <authorList>
            <person name="Sztukowska M."/>
            <person name="Bugno M."/>
            <person name="Potempa J."/>
            <person name="Travis J."/>
            <person name="Kurtz D.M. Jr."/>
        </authorList>
    </citation>
    <scope>NUCLEOTIDE SEQUENCE [GENOMIC DNA]</scope>
    <scope>INDUCTION</scope>
    <source>
        <strain>ATCC BAA-308 / W83</strain>
    </source>
</reference>
<reference key="2">
    <citation type="journal article" date="2003" name="J. Bacteriol.">
        <title>Complete genome sequence of the oral pathogenic bacterium Porphyromonas gingivalis strain W83.</title>
        <authorList>
            <person name="Nelson K.E."/>
            <person name="Fleischmann R.D."/>
            <person name="DeBoy R.T."/>
            <person name="Paulsen I.T."/>
            <person name="Fouts D.E."/>
            <person name="Eisen J.A."/>
            <person name="Daugherty S.C."/>
            <person name="Dodson R.J."/>
            <person name="Durkin A.S."/>
            <person name="Gwinn M.L."/>
            <person name="Haft D.H."/>
            <person name="Kolonay J.F."/>
            <person name="Nelson W.C."/>
            <person name="Mason T.M."/>
            <person name="Tallon L."/>
            <person name="Gray J."/>
            <person name="Granger D."/>
            <person name="Tettelin H."/>
            <person name="Dong H."/>
            <person name="Galvin J.L."/>
            <person name="Duncan M.J."/>
            <person name="Dewhirst F.E."/>
            <person name="Fraser C.M."/>
        </authorList>
    </citation>
    <scope>NUCLEOTIDE SEQUENCE [LARGE SCALE GENOMIC DNA]</scope>
    <source>
        <strain>ATCC BAA-308 / W83</strain>
    </source>
</reference>
<accession>Q9AGG3</accession>
<organism>
    <name type="scientific">Porphyromonas gingivalis (strain ATCC BAA-308 / W83)</name>
    <dbReference type="NCBI Taxonomy" id="242619"/>
    <lineage>
        <taxon>Bacteria</taxon>
        <taxon>Pseudomonadati</taxon>
        <taxon>Bacteroidota</taxon>
        <taxon>Bacteroidia</taxon>
        <taxon>Bacteroidales</taxon>
        <taxon>Porphyromonadaceae</taxon>
        <taxon>Porphyromonas</taxon>
    </lineage>
</organism>
<proteinExistence type="evidence at transcript level"/>
<gene>
    <name type="primary">rbr</name>
    <name type="ordered locus">PG_0195</name>
</gene>
<evidence type="ECO:0000250" key="1"/>
<evidence type="ECO:0000250" key="2">
    <source>
        <dbReference type="UniProtKB" id="P24931"/>
    </source>
</evidence>
<evidence type="ECO:0000255" key="3">
    <source>
        <dbReference type="PROSITE-ProRule" id="PRU00085"/>
    </source>
</evidence>
<evidence type="ECO:0000255" key="4">
    <source>
        <dbReference type="PROSITE-ProRule" id="PRU00241"/>
    </source>
</evidence>
<evidence type="ECO:0000269" key="5">
    <source>
    </source>
</evidence>
<evidence type="ECO:0000303" key="6">
    <source>
    </source>
</evidence>
<evidence type="ECO:0000305" key="7"/>